<proteinExistence type="evidence at transcript level"/>
<dbReference type="EMBL" id="AB169841">
    <property type="protein sequence ID" value="BAE01922.1"/>
    <property type="molecule type" value="mRNA"/>
</dbReference>
<dbReference type="RefSeq" id="XP_005564176.1">
    <property type="nucleotide sequence ID" value="XM_005564119.1"/>
</dbReference>
<dbReference type="RefSeq" id="XP_015310698.1">
    <property type="nucleotide sequence ID" value="XM_015455212.1"/>
</dbReference>
<dbReference type="SMR" id="Q4R4Q3"/>
<dbReference type="STRING" id="9541.ENSMFAP00000025696"/>
<dbReference type="ESTHER" id="macfa-q4r4q3">
    <property type="family name" value="Ndr_family"/>
</dbReference>
<dbReference type="MEROPS" id="S33.988"/>
<dbReference type="Ensembl" id="ENSMFAT00000033859.2">
    <property type="protein sequence ID" value="ENSMFAP00000025707.2"/>
    <property type="gene ID" value="ENSMFAG00000044300.2"/>
</dbReference>
<dbReference type="GeneID" id="102125434"/>
<dbReference type="CTD" id="10397"/>
<dbReference type="VEuPathDB" id="HostDB:ENSMFAG00000044300"/>
<dbReference type="eggNOG" id="KOG2931">
    <property type="taxonomic scope" value="Eukaryota"/>
</dbReference>
<dbReference type="GeneTree" id="ENSGT00950000182872"/>
<dbReference type="OMA" id="LVEKGEX"/>
<dbReference type="Proteomes" id="UP000233100">
    <property type="component" value="Chromosome 8"/>
</dbReference>
<dbReference type="Bgee" id="ENSMFAG00000044300">
    <property type="expression patterns" value="Expressed in adult mammalian kidney and 13 other cell types or tissues"/>
</dbReference>
<dbReference type="GO" id="GO:0005813">
    <property type="term" value="C:centrosome"/>
    <property type="evidence" value="ECO:0007669"/>
    <property type="project" value="UniProtKB-SubCell"/>
</dbReference>
<dbReference type="GO" id="GO:0005829">
    <property type="term" value="C:cytosol"/>
    <property type="evidence" value="ECO:0007669"/>
    <property type="project" value="UniProtKB-SubCell"/>
</dbReference>
<dbReference type="GO" id="GO:0005874">
    <property type="term" value="C:microtubule"/>
    <property type="evidence" value="ECO:0007669"/>
    <property type="project" value="UniProtKB-KW"/>
</dbReference>
<dbReference type="GO" id="GO:0005634">
    <property type="term" value="C:nucleus"/>
    <property type="evidence" value="ECO:0007669"/>
    <property type="project" value="UniProtKB-SubCell"/>
</dbReference>
<dbReference type="GO" id="GO:0005886">
    <property type="term" value="C:plasma membrane"/>
    <property type="evidence" value="ECO:0007669"/>
    <property type="project" value="UniProtKB-SubCell"/>
</dbReference>
<dbReference type="FunFam" id="3.40.50.1820:FF:000006">
    <property type="entry name" value="NDRG family member 3"/>
    <property type="match status" value="1"/>
</dbReference>
<dbReference type="Gene3D" id="3.40.50.1820">
    <property type="entry name" value="alpha/beta hydrolase"/>
    <property type="match status" value="1"/>
</dbReference>
<dbReference type="InterPro" id="IPR029058">
    <property type="entry name" value="AB_hydrolase_fold"/>
</dbReference>
<dbReference type="InterPro" id="IPR004142">
    <property type="entry name" value="NDRG"/>
</dbReference>
<dbReference type="PANTHER" id="PTHR11034">
    <property type="entry name" value="N-MYC DOWNSTREAM REGULATED"/>
    <property type="match status" value="1"/>
</dbReference>
<dbReference type="Pfam" id="PF03096">
    <property type="entry name" value="Ndr"/>
    <property type="match status" value="1"/>
</dbReference>
<dbReference type="SUPFAM" id="SSF53474">
    <property type="entry name" value="alpha/beta-Hydrolases"/>
    <property type="match status" value="1"/>
</dbReference>
<organism>
    <name type="scientific">Macaca fascicularis</name>
    <name type="common">Crab-eating macaque</name>
    <name type="synonym">Cynomolgus monkey</name>
    <dbReference type="NCBI Taxonomy" id="9541"/>
    <lineage>
        <taxon>Eukaryota</taxon>
        <taxon>Metazoa</taxon>
        <taxon>Chordata</taxon>
        <taxon>Craniata</taxon>
        <taxon>Vertebrata</taxon>
        <taxon>Euteleostomi</taxon>
        <taxon>Mammalia</taxon>
        <taxon>Eutheria</taxon>
        <taxon>Euarchontoglires</taxon>
        <taxon>Primates</taxon>
        <taxon>Haplorrhini</taxon>
        <taxon>Catarrhini</taxon>
        <taxon>Cercopithecidae</taxon>
        <taxon>Cercopithecinae</taxon>
        <taxon>Macaca</taxon>
    </lineage>
</organism>
<protein>
    <recommendedName>
        <fullName>Protein NDRG1</fullName>
    </recommendedName>
    <alternativeName>
        <fullName>N-myc downstream-regulated gene 1 protein</fullName>
    </alternativeName>
</protein>
<name>NDRG1_MACFA</name>
<gene>
    <name type="primary">Ndrg1</name>
    <name type="ORF">QtrA-11689</name>
</gene>
<comment type="function">
    <text evidence="1">Stress-responsive protein involved in hormone responses, cell growth, and differentiation. Acts as a tumor suppressor in many cell types. Necessary but not sufficient for p53/TP53-mediated caspase activation and apoptosis. Has a role in cell trafficking notably of the Schwann cell and is necessary for the maintenance and development of the peripheral nerve myelin sheath. Required for vesicular recycling of CDH1 and TF. May also function in lipid trafficking. Protects cells from spindle disruption damage. Functions in p53/TP53-dependent mitotic spindle checkpoint. Regulates microtubule dynamics and maintains euploidy (By similarity).</text>
</comment>
<comment type="subunit">
    <text evidence="1">Interacts with RAB4A (membrane-bound form); the interaction involves NDRG1 in vesicular recycling ofCDH1. Interacts with APOA1, APOA2, PRA1 and RTN1 (By similarity).</text>
</comment>
<comment type="subcellular location">
    <subcellularLocation>
        <location evidence="1">Cytoplasm</location>
        <location evidence="1">Cytosol</location>
    </subcellularLocation>
    <subcellularLocation>
        <location evidence="1">Cytoplasm</location>
        <location evidence="1">Cytoskeleton</location>
        <location evidence="1">Microtubule organizing center</location>
        <location evidence="1">Centrosome</location>
    </subcellularLocation>
    <subcellularLocation>
        <location evidence="1">Nucleus</location>
    </subcellularLocation>
    <subcellularLocation>
        <location evidence="1">Cell membrane</location>
    </subcellularLocation>
    <text>Mainly cytoplasmic but differentially localized to other regions. Associates with the plasma membrane in intestinal epithelia and lactating mammary gland. Translocated to the nucleus in a p53/TP53-dependent manner. In prostate epithelium and placental chorion, located in both the cytoplasm and in the nucleus. No nuclear localization in colon epithelium cells. In intestinal mucosa, prostate and renal cortex, located predominantly adjacent to adherens junctions. Cytoplasmic with granular staining in proximal tubular cells of the kidney and salivary gland ducts. Recruits to the membrane of recycling/sorting and late endosomes via binding to phosphatidylinositol 4-phosphate. Associates with microtubules. Colocalizes with TUBG1 in the centrosome. Cytoplasmic location increased with hypoxia. Phosphorylated form found associated with centromeres during S-phase of mitosis and with the plasma membrane.</text>
</comment>
<comment type="PTM">
    <text evidence="1">Under stress conditions, phosphorylated in the C-terminal on many serine and threonine residues. Phosphorylated in vitro by PKA. Phosphorylation enhanced by increased intracellular cAMP levels. Homocysteine induces dephosphorylation. Phosphorylation by SGK1 is cell cycle dependent (By similarity).</text>
</comment>
<comment type="similarity">
    <text evidence="6">Belongs to the NDRG family.</text>
</comment>
<accession>Q4R4Q3</accession>
<reference key="1">
    <citation type="submission" date="2005-06" db="EMBL/GenBank/DDBJ databases">
        <title>DNA sequences of macaque genes expressed in brain or testis and its evolutionary implications.</title>
        <authorList>
            <consortium name="International consortium for macaque cDNA sequencing and analysis"/>
        </authorList>
    </citation>
    <scope>NUCLEOTIDE SEQUENCE [LARGE SCALE MRNA]</scope>
    <source>
        <tissue>Temporal cortex</tissue>
    </source>
</reference>
<evidence type="ECO:0000250" key="1"/>
<evidence type="ECO:0000250" key="2">
    <source>
        <dbReference type="UniProtKB" id="Q62433"/>
    </source>
</evidence>
<evidence type="ECO:0000250" key="3">
    <source>
        <dbReference type="UniProtKB" id="Q6JE36"/>
    </source>
</evidence>
<evidence type="ECO:0000250" key="4">
    <source>
        <dbReference type="UniProtKB" id="Q92597"/>
    </source>
</evidence>
<evidence type="ECO:0000256" key="5">
    <source>
        <dbReference type="SAM" id="MobiDB-lite"/>
    </source>
</evidence>
<evidence type="ECO:0000305" key="6"/>
<feature type="initiator methionine" description="Removed" evidence="4">
    <location>
        <position position="1"/>
    </location>
</feature>
<feature type="chain" id="PRO_0000270757" description="Protein NDRG1">
    <location>
        <begin position="2"/>
        <end position="394"/>
    </location>
</feature>
<feature type="repeat" description="1">
    <location>
        <begin position="339"/>
        <end position="348"/>
    </location>
</feature>
<feature type="repeat" description="2">
    <location>
        <begin position="349"/>
        <end position="358"/>
    </location>
</feature>
<feature type="repeat" description="3">
    <location>
        <begin position="359"/>
        <end position="368"/>
    </location>
</feature>
<feature type="region of interest" description="Disordered" evidence="5">
    <location>
        <begin position="325"/>
        <end position="394"/>
    </location>
</feature>
<feature type="region of interest" description="3 X 10 AA tandem repeats of G-[PST]-R-S-R-S-H-T-S-E">
    <location>
        <begin position="339"/>
        <end position="368"/>
    </location>
</feature>
<feature type="compositionally biased region" description="Polar residues" evidence="5">
    <location>
        <begin position="327"/>
        <end position="339"/>
    </location>
</feature>
<feature type="compositionally biased region" description="Basic and acidic residues" evidence="5">
    <location>
        <begin position="345"/>
        <end position="371"/>
    </location>
</feature>
<feature type="modified residue" description="N-acetylserine" evidence="4">
    <location>
        <position position="2"/>
    </location>
</feature>
<feature type="modified residue" description="Phosphoserine" evidence="4">
    <location>
        <position position="2"/>
    </location>
</feature>
<feature type="modified residue" description="Phosphoserine" evidence="2">
    <location>
        <position position="319"/>
    </location>
</feature>
<feature type="modified residue" description="Phosphoserine" evidence="4">
    <location>
        <position position="326"/>
    </location>
</feature>
<feature type="modified residue" description="Phosphothreonine; by SGK1" evidence="4">
    <location>
        <position position="328"/>
    </location>
</feature>
<feature type="modified residue" description="Phosphoserine; by SGK1" evidence="4">
    <location>
        <position position="330"/>
    </location>
</feature>
<feature type="modified residue" description="Phosphoserine; by SGK1" evidence="4">
    <location>
        <position position="332"/>
    </location>
</feature>
<feature type="modified residue" description="Phosphoserine" evidence="4">
    <location>
        <position position="333"/>
    </location>
</feature>
<feature type="modified residue" description="Phosphothreonine" evidence="2">
    <location>
        <position position="335"/>
    </location>
</feature>
<feature type="modified residue" description="Phosphoserine" evidence="4">
    <location>
        <position position="336"/>
    </location>
</feature>
<feature type="modified residue" description="Phosphothreonine" evidence="2">
    <location>
        <position position="340"/>
    </location>
</feature>
<feature type="modified residue" description="Phosphoserine" evidence="2">
    <location>
        <position position="342"/>
    </location>
</feature>
<feature type="modified residue" description="Phosphothreonine; by SGK1" evidence="4">
    <location>
        <position position="346"/>
    </location>
</feature>
<feature type="modified residue" description="Phosphoserine" evidence="3">
    <location>
        <position position="352"/>
    </location>
</feature>
<feature type="modified residue" description="Phosphothreonine; by SGK1" evidence="4">
    <location>
        <position position="356"/>
    </location>
</feature>
<feature type="modified residue" description="Phosphoserine" evidence="3">
    <location>
        <position position="362"/>
    </location>
</feature>
<feature type="modified residue" description="Phosphoserine" evidence="4">
    <location>
        <position position="364"/>
    </location>
</feature>
<feature type="modified residue" description="Phosphothreonine" evidence="4">
    <location>
        <position position="366"/>
    </location>
</feature>
<feature type="modified residue" description="Phosphothreonine" evidence="4">
    <location>
        <position position="375"/>
    </location>
</feature>
<keyword id="KW-0007">Acetylation</keyword>
<keyword id="KW-1003">Cell membrane</keyword>
<keyword id="KW-0963">Cytoplasm</keyword>
<keyword id="KW-0206">Cytoskeleton</keyword>
<keyword id="KW-0472">Membrane</keyword>
<keyword id="KW-0493">Microtubule</keyword>
<keyword id="KW-0539">Nucleus</keyword>
<keyword id="KW-0597">Phosphoprotein</keyword>
<keyword id="KW-1185">Reference proteome</keyword>
<keyword id="KW-0677">Repeat</keyword>
<sequence>MSREMQDVDLAEVKPLVEKGETITSLLQEFDVQEQDIETLHGSVHVTLCGTPKGNRPVILTYHDIGMNHKTCYNPLFNYEDMQEITQHFAVCHVDAPGQQDGAASFPAGYMYPSMDQLAEMLPGVLQQFGLKSIIGMGTGAGAYILTRFALNNPEMVEGLVLINVNPCAEGWMDWAASKISGWTQALPDMVVSHLFGKEEMHSNVEVVHTYRQHIVNDMNPGNLHLFINAYNSRRDLEIERPMPGTHTVTLQCPALLVVGDSSPAVDAVVECNSKLDPTKTTLLKMADCGGLPQISQPAKLAEAFKYFVQGMGYMPSASMTRLMRSRTASGSSVTSLDGTRSRSHTSEGTRSRSHTSEGTRSRSHTSEGAHLDITPNSGAAGNNAGPKSMEVSC</sequence>